<sequence>WIMGHMVNNIKQIDEFVNLGSNAIETDVSFDKKANPEYTYHGTPCDCGRDCLRWEYFNDFVKALRTATTPGNSKYDKLFLVVFDLKTSSLYDYRASEAGTKLAKNLLQHYWNNGNNGGRAYIILSIPNLKHYKLITGFQQTLKDEGHAELLDKVGYDFSGNDDIGDVQKTYEKAGVTGHVWQSDGITNCLLRGFTRINAAVANRDSANGIINKVYYWTVDKRQATRDTLDANVDGIMTNYPDITVEILNEDAYKTKFRIATYEDNPWETFKE</sequence>
<organism>
    <name type="scientific">Loxosceles variegata</name>
    <name type="common">Recluse spider</name>
    <dbReference type="NCBI Taxonomy" id="571533"/>
    <lineage>
        <taxon>Eukaryota</taxon>
        <taxon>Metazoa</taxon>
        <taxon>Ecdysozoa</taxon>
        <taxon>Arthropoda</taxon>
        <taxon>Chelicerata</taxon>
        <taxon>Arachnida</taxon>
        <taxon>Araneae</taxon>
        <taxon>Araneomorphae</taxon>
        <taxon>Haplogynae</taxon>
        <taxon>Scytodoidea</taxon>
        <taxon>Sicariidae</taxon>
        <taxon>Loxosceles</taxon>
    </lineage>
</organism>
<keyword id="KW-0204">Cytolysis</keyword>
<keyword id="KW-1061">Dermonecrotic toxin</keyword>
<keyword id="KW-1015">Disulfide bond</keyword>
<keyword id="KW-0354">Hemolysis</keyword>
<keyword id="KW-0442">Lipid degradation</keyword>
<keyword id="KW-0443">Lipid metabolism</keyword>
<keyword id="KW-0456">Lyase</keyword>
<keyword id="KW-0460">Magnesium</keyword>
<keyword id="KW-0479">Metal-binding</keyword>
<keyword id="KW-0964">Secreted</keyword>
<keyword id="KW-0800">Toxin</keyword>
<feature type="chain" id="PRO_0000392811" description="Dermonecrotic toxin LvSicTox-alphaIC1bii">
    <location>
        <begin position="1" status="less than"/>
        <end position="272"/>
    </location>
</feature>
<feature type="active site" evidence="5">
    <location>
        <position position="5"/>
    </location>
</feature>
<feature type="active site" description="Nucleophile" evidence="5">
    <location>
        <position position="41"/>
    </location>
</feature>
<feature type="binding site" evidence="5">
    <location>
        <position position="25"/>
    </location>
    <ligand>
        <name>Mg(2+)</name>
        <dbReference type="ChEBI" id="CHEBI:18420"/>
    </ligand>
</feature>
<feature type="binding site" evidence="5">
    <location>
        <position position="27"/>
    </location>
    <ligand>
        <name>Mg(2+)</name>
        <dbReference type="ChEBI" id="CHEBI:18420"/>
    </ligand>
</feature>
<feature type="binding site" evidence="5">
    <location>
        <position position="84"/>
    </location>
    <ligand>
        <name>Mg(2+)</name>
        <dbReference type="ChEBI" id="CHEBI:18420"/>
    </ligand>
</feature>
<feature type="disulfide bond" evidence="3">
    <location>
        <begin position="45"/>
        <end position="51"/>
    </location>
</feature>
<feature type="disulfide bond" evidence="3">
    <location>
        <begin position="47"/>
        <end position="189"/>
    </location>
</feature>
<feature type="non-terminal residue">
    <location>
        <position position="1"/>
    </location>
</feature>
<evidence type="ECO:0000250" key="1">
    <source>
        <dbReference type="UniProtKB" id="A0A0D4WTV1"/>
    </source>
</evidence>
<evidence type="ECO:0000250" key="2">
    <source>
        <dbReference type="UniProtKB" id="A0A0D4WV12"/>
    </source>
</evidence>
<evidence type="ECO:0000250" key="3">
    <source>
        <dbReference type="UniProtKB" id="P0CE80"/>
    </source>
</evidence>
<evidence type="ECO:0000250" key="4">
    <source>
        <dbReference type="UniProtKB" id="Q4ZFU2"/>
    </source>
</evidence>
<evidence type="ECO:0000250" key="5">
    <source>
        <dbReference type="UniProtKB" id="Q8I914"/>
    </source>
</evidence>
<evidence type="ECO:0000303" key="6">
    <source>
    </source>
</evidence>
<evidence type="ECO:0000305" key="7"/>
<evidence type="ECO:0000305" key="8">
    <source>
    </source>
</evidence>
<comment type="function">
    <text evidence="1 3">Dermonecrotic toxins cleave the phosphodiester linkage between the phosphate and headgroup of certain phospholipids (sphingolipid and lysolipid substrates), forming an alcohol (often choline) and a cyclic phosphate (By similarity). This toxin acts on sphingomyelin (SM) (By similarity). It may also act on ceramide phosphoethanolamine (CPE), lysophosphatidylcholine (LPC) and lysophosphatidylethanolamine (LPE), but not on lysophosphatidylserine (LPS), and lysophosphatidylglycerol (LPG) (By similarity). It acts by transphosphatidylation, releasing exclusively cyclic phosphate products as second products (By similarity). Induces dermonecrosis, hemolysis, increased vascular permeability, edema, inflammatory response, and platelet aggregation (By similarity).</text>
</comment>
<comment type="catalytic activity">
    <reaction evidence="1">
        <text>an N-(acyl)-sphingosylphosphocholine = an N-(acyl)-sphingosyl-1,3-cyclic phosphate + choline</text>
        <dbReference type="Rhea" id="RHEA:60652"/>
        <dbReference type="ChEBI" id="CHEBI:15354"/>
        <dbReference type="ChEBI" id="CHEBI:64583"/>
        <dbReference type="ChEBI" id="CHEBI:143892"/>
    </reaction>
</comment>
<comment type="catalytic activity">
    <reaction evidence="1">
        <text>an N-(acyl)-sphingosylphosphoethanolamine = an N-(acyl)-sphingosyl-1,3-cyclic phosphate + ethanolamine</text>
        <dbReference type="Rhea" id="RHEA:60648"/>
        <dbReference type="ChEBI" id="CHEBI:57603"/>
        <dbReference type="ChEBI" id="CHEBI:143891"/>
        <dbReference type="ChEBI" id="CHEBI:143892"/>
    </reaction>
</comment>
<comment type="catalytic activity">
    <reaction evidence="1">
        <text>a 1-acyl-sn-glycero-3-phosphocholine = a 1-acyl-sn-glycero-2,3-cyclic phosphate + choline</text>
        <dbReference type="Rhea" id="RHEA:60700"/>
        <dbReference type="ChEBI" id="CHEBI:15354"/>
        <dbReference type="ChEBI" id="CHEBI:58168"/>
        <dbReference type="ChEBI" id="CHEBI:143947"/>
    </reaction>
</comment>
<comment type="catalytic activity">
    <reaction evidence="1">
        <text>a 1-acyl-sn-glycero-3-phosphoethanolamine = a 1-acyl-sn-glycero-2,3-cyclic phosphate + ethanolamine</text>
        <dbReference type="Rhea" id="RHEA:60704"/>
        <dbReference type="ChEBI" id="CHEBI:57603"/>
        <dbReference type="ChEBI" id="CHEBI:64381"/>
        <dbReference type="ChEBI" id="CHEBI:143947"/>
    </reaction>
</comment>
<comment type="cofactor">
    <cofactor evidence="5">
        <name>Mg(2+)</name>
        <dbReference type="ChEBI" id="CHEBI:18420"/>
    </cofactor>
    <text evidence="5">Binds 1 Mg(2+) ion per subunit.</text>
</comment>
<comment type="subcellular location">
    <subcellularLocation>
        <location evidence="8">Secreted</location>
    </subcellularLocation>
</comment>
<comment type="tissue specificity">
    <text evidence="8">Expressed by the venom gland.</text>
</comment>
<comment type="similarity">
    <text evidence="7">Belongs to the arthropod phospholipase D family. Class II subfamily.</text>
</comment>
<comment type="caution">
    <text evidence="1 2 4">The most common activity assay for dermonecrotic toxins detects enzymatic activity by monitoring choline release from substrate. Liberation of choline from sphingomyelin (SM) or lysophosphatidylcholine (LPC) is commonly assumed to result from substrate hydrolysis, giving either ceramide-1-phosphate (C1P) or lysophosphatidic acid (LPA), respectively, as a second product. However, two studies from Lajoie and colleagues (2013 and 2015) report the observation of exclusive formation of cyclic phosphate products as second products, resulting from intramolecular transphosphatidylation. Cyclic phosphates have vastly different biological properties from their monoester counterparts, and they may be relevant to the pathology of brown spider envenomation.</text>
</comment>
<accession>C0JAZ5</accession>
<proteinExistence type="evidence at transcript level"/>
<protein>
    <recommendedName>
        <fullName evidence="6">Dermonecrotic toxin LvSicTox-alphaIC1bii</fullName>
        <ecNumber evidence="4">4.6.1.-</ecNumber>
    </recommendedName>
    <alternativeName>
        <fullName>Phospholipase D</fullName>
        <shortName>PLD</shortName>
    </alternativeName>
    <alternativeName>
        <fullName>Sphingomyelin phosphodiesterase D</fullName>
        <shortName>SMD</shortName>
        <shortName>SMase D</shortName>
        <shortName>Sphingomyelinase D</shortName>
    </alternativeName>
</protein>
<dbReference type="EC" id="4.6.1.-" evidence="4"/>
<dbReference type="EMBL" id="FJ171430">
    <property type="protein sequence ID" value="ACN48926.1"/>
    <property type="molecule type" value="mRNA"/>
</dbReference>
<dbReference type="SMR" id="C0JAZ5"/>
<dbReference type="GO" id="GO:0005576">
    <property type="term" value="C:extracellular region"/>
    <property type="evidence" value="ECO:0007669"/>
    <property type="project" value="UniProtKB-SubCell"/>
</dbReference>
<dbReference type="GO" id="GO:0016829">
    <property type="term" value="F:lyase activity"/>
    <property type="evidence" value="ECO:0007669"/>
    <property type="project" value="UniProtKB-KW"/>
</dbReference>
<dbReference type="GO" id="GO:0046872">
    <property type="term" value="F:metal ion binding"/>
    <property type="evidence" value="ECO:0007669"/>
    <property type="project" value="UniProtKB-KW"/>
</dbReference>
<dbReference type="GO" id="GO:0008081">
    <property type="term" value="F:phosphoric diester hydrolase activity"/>
    <property type="evidence" value="ECO:0007669"/>
    <property type="project" value="InterPro"/>
</dbReference>
<dbReference type="GO" id="GO:0090729">
    <property type="term" value="F:toxin activity"/>
    <property type="evidence" value="ECO:0007669"/>
    <property type="project" value="UniProtKB-KW"/>
</dbReference>
<dbReference type="GO" id="GO:0031640">
    <property type="term" value="P:killing of cells of another organism"/>
    <property type="evidence" value="ECO:0007669"/>
    <property type="project" value="UniProtKB-KW"/>
</dbReference>
<dbReference type="GO" id="GO:0016042">
    <property type="term" value="P:lipid catabolic process"/>
    <property type="evidence" value="ECO:0007669"/>
    <property type="project" value="UniProtKB-KW"/>
</dbReference>
<dbReference type="CDD" id="cd08576">
    <property type="entry name" value="GDPD_like_SMaseD_PLD"/>
    <property type="match status" value="1"/>
</dbReference>
<dbReference type="Gene3D" id="3.20.20.190">
    <property type="entry name" value="Phosphatidylinositol (PI) phosphodiesterase"/>
    <property type="match status" value="1"/>
</dbReference>
<dbReference type="InterPro" id="IPR017946">
    <property type="entry name" value="PLC-like_Pdiesterase_TIM-brl"/>
</dbReference>
<dbReference type="SUPFAM" id="SSF51695">
    <property type="entry name" value="PLC-like phosphodiesterases"/>
    <property type="match status" value="1"/>
</dbReference>
<reference key="1">
    <citation type="journal article" date="2009" name="Mol. Biol. Evol.">
        <title>Molecular evolution, functional variation, and proposed nomenclature of the gene family that includes sphingomyelinase D in sicariid spider venoms.</title>
        <authorList>
            <person name="Binford G.J."/>
            <person name="Bodner M.R."/>
            <person name="Cordes M.H."/>
            <person name="Baldwin K.L."/>
            <person name="Rynerson M.R."/>
            <person name="Burns S.N."/>
            <person name="Zobel-Thropp P.A."/>
        </authorList>
    </citation>
    <scope>NUCLEOTIDE SEQUENCE [MRNA]</scope>
    <scope>NOMENCLATURE</scope>
    <source>
        <tissue>Venom gland</tissue>
    </source>
</reference>
<name>A1OB2_LOXVA</name>